<dbReference type="EMBL" id="AM933173">
    <property type="protein sequence ID" value="CAR38396.1"/>
    <property type="molecule type" value="Genomic_DNA"/>
</dbReference>
<dbReference type="RefSeq" id="WP_000028952.1">
    <property type="nucleotide sequence ID" value="NC_011274.1"/>
</dbReference>
<dbReference type="SMR" id="B5RD10"/>
<dbReference type="GeneID" id="66756972"/>
<dbReference type="KEGG" id="seg:SG2576"/>
<dbReference type="HOGENOM" id="CLU_069054_5_1_6"/>
<dbReference type="Proteomes" id="UP000008321">
    <property type="component" value="Chromosome"/>
</dbReference>
<dbReference type="GO" id="GO:0005829">
    <property type="term" value="C:cytosol"/>
    <property type="evidence" value="ECO:0007669"/>
    <property type="project" value="TreeGrafter"/>
</dbReference>
<dbReference type="GO" id="GO:0051537">
    <property type="term" value="F:2 iron, 2 sulfur cluster binding"/>
    <property type="evidence" value="ECO:0007669"/>
    <property type="project" value="TreeGrafter"/>
</dbReference>
<dbReference type="GO" id="GO:0005506">
    <property type="term" value="F:iron ion binding"/>
    <property type="evidence" value="ECO:0007669"/>
    <property type="project" value="UniProtKB-UniRule"/>
</dbReference>
<dbReference type="GO" id="GO:0016226">
    <property type="term" value="P:iron-sulfur cluster assembly"/>
    <property type="evidence" value="ECO:0007669"/>
    <property type="project" value="UniProtKB-UniRule"/>
</dbReference>
<dbReference type="FunFam" id="2.60.300.12:FF:000001">
    <property type="entry name" value="Iron-binding protein IscA"/>
    <property type="match status" value="1"/>
</dbReference>
<dbReference type="Gene3D" id="2.60.300.12">
    <property type="entry name" value="HesB-like domain"/>
    <property type="match status" value="1"/>
</dbReference>
<dbReference type="HAMAP" id="MF_01429">
    <property type="entry name" value="Fe_S_insert_IscA"/>
    <property type="match status" value="1"/>
</dbReference>
<dbReference type="InterPro" id="IPR050322">
    <property type="entry name" value="Fe-S_cluster_asmbl/transfer"/>
</dbReference>
<dbReference type="InterPro" id="IPR000361">
    <property type="entry name" value="FeS_biogenesis"/>
</dbReference>
<dbReference type="InterPro" id="IPR016092">
    <property type="entry name" value="FeS_cluster_insertion"/>
</dbReference>
<dbReference type="InterPro" id="IPR017870">
    <property type="entry name" value="FeS_cluster_insertion_CS"/>
</dbReference>
<dbReference type="InterPro" id="IPR035903">
    <property type="entry name" value="HesB-like_dom_sf"/>
</dbReference>
<dbReference type="InterPro" id="IPR011302">
    <property type="entry name" value="IscA_proteobacteria"/>
</dbReference>
<dbReference type="NCBIfam" id="TIGR00049">
    <property type="entry name" value="iron-sulfur cluster assembly accessory protein"/>
    <property type="match status" value="1"/>
</dbReference>
<dbReference type="NCBIfam" id="TIGR02011">
    <property type="entry name" value="IscA"/>
    <property type="match status" value="1"/>
</dbReference>
<dbReference type="NCBIfam" id="NF007049">
    <property type="entry name" value="PRK09502.1"/>
    <property type="match status" value="1"/>
</dbReference>
<dbReference type="PANTHER" id="PTHR10072:SF41">
    <property type="entry name" value="IRON-SULFUR CLUSTER ASSEMBLY 1 HOMOLOG, MITOCHONDRIAL"/>
    <property type="match status" value="1"/>
</dbReference>
<dbReference type="PANTHER" id="PTHR10072">
    <property type="entry name" value="IRON-SULFUR CLUSTER ASSEMBLY PROTEIN"/>
    <property type="match status" value="1"/>
</dbReference>
<dbReference type="Pfam" id="PF01521">
    <property type="entry name" value="Fe-S_biosyn"/>
    <property type="match status" value="1"/>
</dbReference>
<dbReference type="SUPFAM" id="SSF89360">
    <property type="entry name" value="HesB-like domain"/>
    <property type="match status" value="1"/>
</dbReference>
<dbReference type="PROSITE" id="PS01152">
    <property type="entry name" value="HESB"/>
    <property type="match status" value="1"/>
</dbReference>
<organism>
    <name type="scientific">Salmonella gallinarum (strain 287/91 / NCTC 13346)</name>
    <dbReference type="NCBI Taxonomy" id="550538"/>
    <lineage>
        <taxon>Bacteria</taxon>
        <taxon>Pseudomonadati</taxon>
        <taxon>Pseudomonadota</taxon>
        <taxon>Gammaproteobacteria</taxon>
        <taxon>Enterobacterales</taxon>
        <taxon>Enterobacteriaceae</taxon>
        <taxon>Salmonella</taxon>
    </lineage>
</organism>
<reference key="1">
    <citation type="journal article" date="2008" name="Genome Res.">
        <title>Comparative genome analysis of Salmonella enteritidis PT4 and Salmonella gallinarum 287/91 provides insights into evolutionary and host adaptation pathways.</title>
        <authorList>
            <person name="Thomson N.R."/>
            <person name="Clayton D.J."/>
            <person name="Windhorst D."/>
            <person name="Vernikos G."/>
            <person name="Davidson S."/>
            <person name="Churcher C."/>
            <person name="Quail M.A."/>
            <person name="Stevens M."/>
            <person name="Jones M.A."/>
            <person name="Watson M."/>
            <person name="Barron A."/>
            <person name="Layton A."/>
            <person name="Pickard D."/>
            <person name="Kingsley R.A."/>
            <person name="Bignell A."/>
            <person name="Clark L."/>
            <person name="Harris B."/>
            <person name="Ormond D."/>
            <person name="Abdellah Z."/>
            <person name="Brooks K."/>
            <person name="Cherevach I."/>
            <person name="Chillingworth T."/>
            <person name="Woodward J."/>
            <person name="Norberczak H."/>
            <person name="Lord A."/>
            <person name="Arrowsmith C."/>
            <person name="Jagels K."/>
            <person name="Moule S."/>
            <person name="Mungall K."/>
            <person name="Saunders M."/>
            <person name="Whitehead S."/>
            <person name="Chabalgoity J.A."/>
            <person name="Maskell D."/>
            <person name="Humphreys T."/>
            <person name="Roberts M."/>
            <person name="Barrow P.A."/>
            <person name="Dougan G."/>
            <person name="Parkhill J."/>
        </authorList>
    </citation>
    <scope>NUCLEOTIDE SEQUENCE [LARGE SCALE GENOMIC DNA]</scope>
    <source>
        <strain>287/91 / NCTC 13346</strain>
    </source>
</reference>
<gene>
    <name evidence="1" type="primary">iscA</name>
    <name type="ordered locus">SG2576</name>
</gene>
<proteinExistence type="inferred from homology"/>
<sequence length="107" mass="11504">MSITLSDSAAARVNTFLANRGKGFGLRLGVRTSGCSGMAYVLEFVDEPTAEDTVFEDKGVKVVVDGKSLQFLDGTQLDFVKEGLNEGFKFSNPNVKDECGCGESFHV</sequence>
<keyword id="KW-0408">Iron</keyword>
<keyword id="KW-0479">Metal-binding</keyword>
<protein>
    <recommendedName>
        <fullName evidence="1">Iron-binding protein IscA</fullName>
    </recommendedName>
    <alternativeName>
        <fullName evidence="1">Iron-sulfur cluster assembly protein</fullName>
    </alternativeName>
</protein>
<comment type="function">
    <text evidence="1">Is able to transfer iron-sulfur clusters to apo-ferredoxin. Multiple cycles of [2Fe2S] cluster formation and transfer are observed, suggesting that IscA acts catalytically. Recruits intracellular free iron so as to provide iron for the assembly of transient iron-sulfur cluster in IscU in the presence of IscS, L-cysteine and the thioredoxin reductase system TrxA/TrxB.</text>
</comment>
<comment type="cofactor">
    <cofactor evidence="1">
        <name>Fe cation</name>
        <dbReference type="ChEBI" id="CHEBI:24875"/>
    </cofactor>
    <text evidence="1">Binds 2 iron ions per dimer. The dimer may bind additional iron ions.</text>
</comment>
<comment type="subunit">
    <text evidence="1">Homodimer; may form tetramers and higher multimers.</text>
</comment>
<comment type="similarity">
    <text evidence="1">Belongs to the HesB/IscA family.</text>
</comment>
<name>ISCA_SALG2</name>
<evidence type="ECO:0000255" key="1">
    <source>
        <dbReference type="HAMAP-Rule" id="MF_01429"/>
    </source>
</evidence>
<accession>B5RD10</accession>
<feature type="chain" id="PRO_1000145762" description="Iron-binding protein IscA">
    <location>
        <begin position="1"/>
        <end position="107"/>
    </location>
</feature>
<feature type="binding site" evidence="1">
    <location>
        <position position="35"/>
    </location>
    <ligand>
        <name>Fe cation</name>
        <dbReference type="ChEBI" id="CHEBI:24875"/>
    </ligand>
</feature>
<feature type="binding site" evidence="1">
    <location>
        <position position="99"/>
    </location>
    <ligand>
        <name>Fe cation</name>
        <dbReference type="ChEBI" id="CHEBI:24875"/>
    </ligand>
</feature>
<feature type="binding site" evidence="1">
    <location>
        <position position="101"/>
    </location>
    <ligand>
        <name>Fe cation</name>
        <dbReference type="ChEBI" id="CHEBI:24875"/>
    </ligand>
</feature>